<geneLocation type="mitochondrion"/>
<sequence>MLEGAKSIGAGAATIASAGAAIGIGNVLSSSIHSVARNPSLAKQSFGYAILGFALTEAIASFAPMMAFLISSVIPIKESKKEG</sequence>
<accession>P17254</accession>
<proteinExistence type="inferred from homology"/>
<evidence type="ECO:0000250" key="1"/>
<evidence type="ECO:0000255" key="2"/>
<evidence type="ECO:0000305" key="3"/>
<gene>
    <name type="primary">ATP9</name>
</gene>
<dbReference type="EMBL" id="X51895">
    <property type="protein sequence ID" value="CAA36177.1"/>
    <property type="molecule type" value="Genomic_DNA"/>
</dbReference>
<dbReference type="PIR" id="S09241">
    <property type="entry name" value="LWFSM"/>
</dbReference>
<dbReference type="SMR" id="P17254"/>
<dbReference type="GO" id="GO:0031966">
    <property type="term" value="C:mitochondrial membrane"/>
    <property type="evidence" value="ECO:0007669"/>
    <property type="project" value="UniProtKB-SubCell"/>
</dbReference>
<dbReference type="GO" id="GO:0045259">
    <property type="term" value="C:proton-transporting ATP synthase complex"/>
    <property type="evidence" value="ECO:0007669"/>
    <property type="project" value="UniProtKB-KW"/>
</dbReference>
<dbReference type="GO" id="GO:0033177">
    <property type="term" value="C:proton-transporting two-sector ATPase complex, proton-transporting domain"/>
    <property type="evidence" value="ECO:0007669"/>
    <property type="project" value="InterPro"/>
</dbReference>
<dbReference type="GO" id="GO:0005524">
    <property type="term" value="F:ATP binding"/>
    <property type="evidence" value="ECO:0007669"/>
    <property type="project" value="UniProtKB-KW"/>
</dbReference>
<dbReference type="GO" id="GO:0008289">
    <property type="term" value="F:lipid binding"/>
    <property type="evidence" value="ECO:0007669"/>
    <property type="project" value="UniProtKB-KW"/>
</dbReference>
<dbReference type="GO" id="GO:0015078">
    <property type="term" value="F:proton transmembrane transporter activity"/>
    <property type="evidence" value="ECO:0007669"/>
    <property type="project" value="InterPro"/>
</dbReference>
<dbReference type="GO" id="GO:0015986">
    <property type="term" value="P:proton motive force-driven ATP synthesis"/>
    <property type="evidence" value="ECO:0007669"/>
    <property type="project" value="InterPro"/>
</dbReference>
<dbReference type="CDD" id="cd18182">
    <property type="entry name" value="ATP-synt_Fo_c_ATP5G3"/>
    <property type="match status" value="1"/>
</dbReference>
<dbReference type="FunFam" id="1.20.20.10:FF:000005">
    <property type="entry name" value="ATP synthase subunit 9, mitochondrial"/>
    <property type="match status" value="1"/>
</dbReference>
<dbReference type="Gene3D" id="1.20.20.10">
    <property type="entry name" value="F1F0 ATP synthase subunit C"/>
    <property type="match status" value="1"/>
</dbReference>
<dbReference type="HAMAP" id="MF_01396">
    <property type="entry name" value="ATP_synth_c_bact"/>
    <property type="match status" value="1"/>
</dbReference>
<dbReference type="InterPro" id="IPR000454">
    <property type="entry name" value="ATP_synth_F0_csu"/>
</dbReference>
<dbReference type="InterPro" id="IPR020537">
    <property type="entry name" value="ATP_synth_F0_csu_DDCD_BS"/>
</dbReference>
<dbReference type="InterPro" id="IPR038662">
    <property type="entry name" value="ATP_synth_F0_csu_sf"/>
</dbReference>
<dbReference type="InterPro" id="IPR002379">
    <property type="entry name" value="ATPase_proteolipid_c-like_dom"/>
</dbReference>
<dbReference type="InterPro" id="IPR035921">
    <property type="entry name" value="F/V-ATP_Csub_sf"/>
</dbReference>
<dbReference type="PANTHER" id="PTHR10031">
    <property type="entry name" value="ATP SYNTHASE LIPID-BINDING PROTEIN, MITOCHONDRIAL"/>
    <property type="match status" value="1"/>
</dbReference>
<dbReference type="PANTHER" id="PTHR10031:SF57">
    <property type="entry name" value="ATP SYNTHASE SUBUNIT 9, MITOCHONDRIAL"/>
    <property type="match status" value="1"/>
</dbReference>
<dbReference type="Pfam" id="PF00137">
    <property type="entry name" value="ATP-synt_C"/>
    <property type="match status" value="1"/>
</dbReference>
<dbReference type="PRINTS" id="PR00124">
    <property type="entry name" value="ATPASEC"/>
</dbReference>
<dbReference type="SUPFAM" id="SSF81333">
    <property type="entry name" value="F1F0 ATP synthase subunit C"/>
    <property type="match status" value="1"/>
</dbReference>
<dbReference type="PROSITE" id="PS00605">
    <property type="entry name" value="ATPASE_C"/>
    <property type="match status" value="1"/>
</dbReference>
<organism>
    <name type="scientific">Helianthus annuus</name>
    <name type="common">Common sunflower</name>
    <dbReference type="NCBI Taxonomy" id="4232"/>
    <lineage>
        <taxon>Eukaryota</taxon>
        <taxon>Viridiplantae</taxon>
        <taxon>Streptophyta</taxon>
        <taxon>Embryophyta</taxon>
        <taxon>Tracheophyta</taxon>
        <taxon>Spermatophyta</taxon>
        <taxon>Magnoliopsida</taxon>
        <taxon>eudicotyledons</taxon>
        <taxon>Gunneridae</taxon>
        <taxon>Pentapetalae</taxon>
        <taxon>asterids</taxon>
        <taxon>campanulids</taxon>
        <taxon>Asterales</taxon>
        <taxon>Asteraceae</taxon>
        <taxon>Asteroideae</taxon>
        <taxon>Heliantheae alliance</taxon>
        <taxon>Heliantheae</taxon>
        <taxon>Helianthus</taxon>
    </lineage>
</organism>
<reference key="1">
    <citation type="journal article" date="1990" name="Nucleic Acids Res.">
        <title>The sequence of the sunflower mitochondrial ATPase subunit 9 gene.</title>
        <authorList>
            <person name="Recipon H."/>
        </authorList>
    </citation>
    <scope>NUCLEOTIDE SEQUENCE [GENOMIC DNA]</scope>
    <source>
        <strain>cv. HA89</strain>
    </source>
</reference>
<feature type="chain" id="PRO_0000112212" description="ATP synthase subunit 9, mitochondrial">
    <location>
        <begin position="1"/>
        <end position="83"/>
    </location>
</feature>
<feature type="transmembrane region" description="Helical" evidence="2">
    <location>
        <begin position="8"/>
        <end position="28"/>
    </location>
</feature>
<feature type="transmembrane region" description="Helical" evidence="2">
    <location>
        <begin position="45"/>
        <end position="72"/>
    </location>
</feature>
<feature type="site" description="Reversibly protonated during proton transport" evidence="1">
    <location>
        <position position="57"/>
    </location>
</feature>
<protein>
    <recommendedName>
        <fullName>ATP synthase subunit 9, mitochondrial</fullName>
    </recommendedName>
    <alternativeName>
        <fullName>Lipid-binding protein</fullName>
    </alternativeName>
</protein>
<keyword id="KW-0067">ATP-binding</keyword>
<keyword id="KW-0138">CF(0)</keyword>
<keyword id="KW-0375">Hydrogen ion transport</keyword>
<keyword id="KW-0406">Ion transport</keyword>
<keyword id="KW-0446">Lipid-binding</keyword>
<keyword id="KW-0472">Membrane</keyword>
<keyword id="KW-0496">Mitochondrion</keyword>
<keyword id="KW-0547">Nucleotide-binding</keyword>
<keyword id="KW-0812">Transmembrane</keyword>
<keyword id="KW-1133">Transmembrane helix</keyword>
<keyword id="KW-0813">Transport</keyword>
<comment type="function">
    <text>This protein is one of the chains of the nonenzymatic membrane component (F0) of mitochondrial ATPase.</text>
</comment>
<comment type="subunit">
    <text>F-type ATPases have 2 components, CF(1) - the catalytic core - and CF(0) - the membrane proton channel. CF(1) has five subunits: alpha(3), beta(3), gamma(1), delta(1), epsilon(1). CF(0) has three main subunits: a, b and c.</text>
</comment>
<comment type="subcellular location">
    <subcellularLocation>
        <location evidence="3">Mitochondrion membrane</location>
        <topology evidence="3">Multi-pass membrane protein</topology>
    </subcellularLocation>
</comment>
<comment type="similarity">
    <text evidence="3">Belongs to the ATPase C chain family.</text>
</comment>
<name>ATP9_HELAN</name>